<dbReference type="EMBL" id="AP006618">
    <property type="protein sequence ID" value="BAD55679.1"/>
    <property type="molecule type" value="Genomic_DNA"/>
</dbReference>
<dbReference type="RefSeq" id="WP_011207364.1">
    <property type="nucleotide sequence ID" value="NC_006361.1"/>
</dbReference>
<dbReference type="SMR" id="Q5Z1L2"/>
<dbReference type="STRING" id="247156.NFA_8340"/>
<dbReference type="GeneID" id="61131662"/>
<dbReference type="KEGG" id="nfa:NFA_8340"/>
<dbReference type="eggNOG" id="COG0099">
    <property type="taxonomic scope" value="Bacteria"/>
</dbReference>
<dbReference type="HOGENOM" id="CLU_103849_1_2_11"/>
<dbReference type="OrthoDB" id="9803610at2"/>
<dbReference type="Proteomes" id="UP000006820">
    <property type="component" value="Chromosome"/>
</dbReference>
<dbReference type="GO" id="GO:0005829">
    <property type="term" value="C:cytosol"/>
    <property type="evidence" value="ECO:0007669"/>
    <property type="project" value="TreeGrafter"/>
</dbReference>
<dbReference type="GO" id="GO:0015935">
    <property type="term" value="C:small ribosomal subunit"/>
    <property type="evidence" value="ECO:0007669"/>
    <property type="project" value="TreeGrafter"/>
</dbReference>
<dbReference type="GO" id="GO:0019843">
    <property type="term" value="F:rRNA binding"/>
    <property type="evidence" value="ECO:0007669"/>
    <property type="project" value="UniProtKB-UniRule"/>
</dbReference>
<dbReference type="GO" id="GO:0003735">
    <property type="term" value="F:structural constituent of ribosome"/>
    <property type="evidence" value="ECO:0007669"/>
    <property type="project" value="InterPro"/>
</dbReference>
<dbReference type="GO" id="GO:0000049">
    <property type="term" value="F:tRNA binding"/>
    <property type="evidence" value="ECO:0007669"/>
    <property type="project" value="UniProtKB-UniRule"/>
</dbReference>
<dbReference type="GO" id="GO:0006412">
    <property type="term" value="P:translation"/>
    <property type="evidence" value="ECO:0007669"/>
    <property type="project" value="UniProtKB-UniRule"/>
</dbReference>
<dbReference type="FunFam" id="1.10.8.50:FF:000001">
    <property type="entry name" value="30S ribosomal protein S13"/>
    <property type="match status" value="1"/>
</dbReference>
<dbReference type="FunFam" id="4.10.910.10:FF:000001">
    <property type="entry name" value="30S ribosomal protein S13"/>
    <property type="match status" value="1"/>
</dbReference>
<dbReference type="Gene3D" id="1.10.8.50">
    <property type="match status" value="1"/>
</dbReference>
<dbReference type="Gene3D" id="4.10.910.10">
    <property type="entry name" value="30s ribosomal protein s13, domain 2"/>
    <property type="match status" value="1"/>
</dbReference>
<dbReference type="HAMAP" id="MF_01315">
    <property type="entry name" value="Ribosomal_uS13"/>
    <property type="match status" value="1"/>
</dbReference>
<dbReference type="InterPro" id="IPR027437">
    <property type="entry name" value="Rbsml_uS13_C"/>
</dbReference>
<dbReference type="InterPro" id="IPR001892">
    <property type="entry name" value="Ribosomal_uS13"/>
</dbReference>
<dbReference type="InterPro" id="IPR010979">
    <property type="entry name" value="Ribosomal_uS13-like_H2TH"/>
</dbReference>
<dbReference type="InterPro" id="IPR019980">
    <property type="entry name" value="Ribosomal_uS13_bac-type"/>
</dbReference>
<dbReference type="InterPro" id="IPR018269">
    <property type="entry name" value="Ribosomal_uS13_CS"/>
</dbReference>
<dbReference type="NCBIfam" id="TIGR03631">
    <property type="entry name" value="uS13_bact"/>
    <property type="match status" value="1"/>
</dbReference>
<dbReference type="PANTHER" id="PTHR10871">
    <property type="entry name" value="30S RIBOSOMAL PROTEIN S13/40S RIBOSOMAL PROTEIN S18"/>
    <property type="match status" value="1"/>
</dbReference>
<dbReference type="PANTHER" id="PTHR10871:SF1">
    <property type="entry name" value="SMALL RIBOSOMAL SUBUNIT PROTEIN US13M"/>
    <property type="match status" value="1"/>
</dbReference>
<dbReference type="Pfam" id="PF00416">
    <property type="entry name" value="Ribosomal_S13"/>
    <property type="match status" value="1"/>
</dbReference>
<dbReference type="PIRSF" id="PIRSF002134">
    <property type="entry name" value="Ribosomal_S13"/>
    <property type="match status" value="1"/>
</dbReference>
<dbReference type="SUPFAM" id="SSF46946">
    <property type="entry name" value="S13-like H2TH domain"/>
    <property type="match status" value="1"/>
</dbReference>
<dbReference type="PROSITE" id="PS00646">
    <property type="entry name" value="RIBOSOMAL_S13_1"/>
    <property type="match status" value="1"/>
</dbReference>
<dbReference type="PROSITE" id="PS50159">
    <property type="entry name" value="RIBOSOMAL_S13_2"/>
    <property type="match status" value="1"/>
</dbReference>
<protein>
    <recommendedName>
        <fullName evidence="1">Small ribosomal subunit protein uS13</fullName>
    </recommendedName>
    <alternativeName>
        <fullName evidence="3">30S ribosomal protein S13</fullName>
    </alternativeName>
</protein>
<organism>
    <name type="scientific">Nocardia farcinica (strain IFM 10152)</name>
    <dbReference type="NCBI Taxonomy" id="247156"/>
    <lineage>
        <taxon>Bacteria</taxon>
        <taxon>Bacillati</taxon>
        <taxon>Actinomycetota</taxon>
        <taxon>Actinomycetes</taxon>
        <taxon>Mycobacteriales</taxon>
        <taxon>Nocardiaceae</taxon>
        <taxon>Nocardia</taxon>
    </lineage>
</organism>
<keyword id="KW-1185">Reference proteome</keyword>
<keyword id="KW-0687">Ribonucleoprotein</keyword>
<keyword id="KW-0689">Ribosomal protein</keyword>
<keyword id="KW-0694">RNA-binding</keyword>
<keyword id="KW-0699">rRNA-binding</keyword>
<keyword id="KW-0820">tRNA-binding</keyword>
<comment type="function">
    <text evidence="1">Located at the top of the head of the 30S subunit, it contacts several helices of the 16S rRNA. In the 70S ribosome it contacts the 23S rRNA (bridge B1a) and protein L5 of the 50S subunit (bridge B1b), connecting the 2 subunits; these bridges are implicated in subunit movement. Contacts the tRNAs in the A and P-sites.</text>
</comment>
<comment type="subunit">
    <text evidence="1">Part of the 30S ribosomal subunit. Forms a loose heterodimer with protein S19. Forms two bridges to the 50S subunit in the 70S ribosome.</text>
</comment>
<comment type="similarity">
    <text evidence="1">Belongs to the universal ribosomal protein uS13 family.</text>
</comment>
<reference key="1">
    <citation type="journal article" date="2004" name="Proc. Natl. Acad. Sci. U.S.A.">
        <title>The complete genomic sequence of Nocardia farcinica IFM 10152.</title>
        <authorList>
            <person name="Ishikawa J."/>
            <person name="Yamashita A."/>
            <person name="Mikami Y."/>
            <person name="Hoshino Y."/>
            <person name="Kurita H."/>
            <person name="Hotta K."/>
            <person name="Shiba T."/>
            <person name="Hattori M."/>
        </authorList>
    </citation>
    <scope>NUCLEOTIDE SEQUENCE [LARGE SCALE GENOMIC DNA]</scope>
    <source>
        <strain>IFM 10152</strain>
    </source>
</reference>
<proteinExistence type="inferred from homology"/>
<feature type="chain" id="PRO_0000230535" description="Small ribosomal subunit protein uS13">
    <location>
        <begin position="1"/>
        <end position="123"/>
    </location>
</feature>
<feature type="region of interest" description="Disordered" evidence="2">
    <location>
        <begin position="96"/>
        <end position="123"/>
    </location>
</feature>
<name>RS13_NOCFA</name>
<accession>Q5Z1L2</accession>
<sequence>MARLMGVDLPREKRMEIALTYIYGIGRTRSKEILEATGVSPDLRSKDLSDDDLTKLRDYIEASEFKVEGDLRREVQADIRRKIEIGCYQGLRHRRGLPVRGQRTKTNARTRKGPKKTVAGKKK</sequence>
<evidence type="ECO:0000255" key="1">
    <source>
        <dbReference type="HAMAP-Rule" id="MF_01315"/>
    </source>
</evidence>
<evidence type="ECO:0000256" key="2">
    <source>
        <dbReference type="SAM" id="MobiDB-lite"/>
    </source>
</evidence>
<evidence type="ECO:0000305" key="3"/>
<gene>
    <name evidence="1" type="primary">rpsM</name>
    <name type="ordered locus">NFA_8340</name>
</gene>